<gene>
    <name evidence="1" type="primary">dnaK</name>
    <name type="ordered locus">lwe1488</name>
</gene>
<dbReference type="EMBL" id="AM263198">
    <property type="protein sequence ID" value="CAK20906.1"/>
    <property type="molecule type" value="Genomic_DNA"/>
</dbReference>
<dbReference type="RefSeq" id="WP_011702279.1">
    <property type="nucleotide sequence ID" value="NC_008555.1"/>
</dbReference>
<dbReference type="SMR" id="A0AIS4"/>
<dbReference type="STRING" id="386043.lwe1488"/>
<dbReference type="GeneID" id="61189364"/>
<dbReference type="KEGG" id="lwe:lwe1488"/>
<dbReference type="eggNOG" id="COG0443">
    <property type="taxonomic scope" value="Bacteria"/>
</dbReference>
<dbReference type="HOGENOM" id="CLU_005965_2_4_9"/>
<dbReference type="OrthoDB" id="9766019at2"/>
<dbReference type="Proteomes" id="UP000000779">
    <property type="component" value="Chromosome"/>
</dbReference>
<dbReference type="GO" id="GO:0005524">
    <property type="term" value="F:ATP binding"/>
    <property type="evidence" value="ECO:0007669"/>
    <property type="project" value="UniProtKB-UniRule"/>
</dbReference>
<dbReference type="GO" id="GO:0140662">
    <property type="term" value="F:ATP-dependent protein folding chaperone"/>
    <property type="evidence" value="ECO:0007669"/>
    <property type="project" value="InterPro"/>
</dbReference>
<dbReference type="GO" id="GO:0051082">
    <property type="term" value="F:unfolded protein binding"/>
    <property type="evidence" value="ECO:0007669"/>
    <property type="project" value="InterPro"/>
</dbReference>
<dbReference type="CDD" id="cd10234">
    <property type="entry name" value="ASKHA_NBD_HSP70_DnaK-like"/>
    <property type="match status" value="1"/>
</dbReference>
<dbReference type="FunFam" id="2.60.34.10:FF:000014">
    <property type="entry name" value="Chaperone protein DnaK HSP70"/>
    <property type="match status" value="1"/>
</dbReference>
<dbReference type="FunFam" id="1.20.1270.10:FF:000001">
    <property type="entry name" value="Molecular chaperone DnaK"/>
    <property type="match status" value="1"/>
</dbReference>
<dbReference type="FunFam" id="3.30.420.40:FF:000071">
    <property type="entry name" value="Molecular chaperone DnaK"/>
    <property type="match status" value="1"/>
</dbReference>
<dbReference type="FunFam" id="3.90.640.10:FF:000003">
    <property type="entry name" value="Molecular chaperone DnaK"/>
    <property type="match status" value="1"/>
</dbReference>
<dbReference type="Gene3D" id="1.20.1270.10">
    <property type="match status" value="1"/>
</dbReference>
<dbReference type="Gene3D" id="3.30.420.40">
    <property type="match status" value="2"/>
</dbReference>
<dbReference type="Gene3D" id="3.90.640.10">
    <property type="entry name" value="Actin, Chain A, domain 4"/>
    <property type="match status" value="1"/>
</dbReference>
<dbReference type="Gene3D" id="2.60.34.10">
    <property type="entry name" value="Substrate Binding Domain Of DNAk, Chain A, domain 1"/>
    <property type="match status" value="1"/>
</dbReference>
<dbReference type="HAMAP" id="MF_00332">
    <property type="entry name" value="DnaK"/>
    <property type="match status" value="1"/>
</dbReference>
<dbReference type="InterPro" id="IPR043129">
    <property type="entry name" value="ATPase_NBD"/>
</dbReference>
<dbReference type="InterPro" id="IPR012725">
    <property type="entry name" value="Chaperone_DnaK"/>
</dbReference>
<dbReference type="InterPro" id="IPR018181">
    <property type="entry name" value="Heat_shock_70_CS"/>
</dbReference>
<dbReference type="InterPro" id="IPR029048">
    <property type="entry name" value="HSP70_C_sf"/>
</dbReference>
<dbReference type="InterPro" id="IPR029047">
    <property type="entry name" value="HSP70_peptide-bd_sf"/>
</dbReference>
<dbReference type="InterPro" id="IPR013126">
    <property type="entry name" value="Hsp_70_fam"/>
</dbReference>
<dbReference type="NCBIfam" id="NF001413">
    <property type="entry name" value="PRK00290.1"/>
    <property type="match status" value="1"/>
</dbReference>
<dbReference type="NCBIfam" id="TIGR02350">
    <property type="entry name" value="prok_dnaK"/>
    <property type="match status" value="1"/>
</dbReference>
<dbReference type="PANTHER" id="PTHR19375">
    <property type="entry name" value="HEAT SHOCK PROTEIN 70KDA"/>
    <property type="match status" value="1"/>
</dbReference>
<dbReference type="Pfam" id="PF00012">
    <property type="entry name" value="HSP70"/>
    <property type="match status" value="1"/>
</dbReference>
<dbReference type="PRINTS" id="PR00301">
    <property type="entry name" value="HEATSHOCK70"/>
</dbReference>
<dbReference type="SUPFAM" id="SSF53067">
    <property type="entry name" value="Actin-like ATPase domain"/>
    <property type="match status" value="2"/>
</dbReference>
<dbReference type="SUPFAM" id="SSF100934">
    <property type="entry name" value="Heat shock protein 70kD (HSP70), C-terminal subdomain"/>
    <property type="match status" value="1"/>
</dbReference>
<dbReference type="SUPFAM" id="SSF100920">
    <property type="entry name" value="Heat shock protein 70kD (HSP70), peptide-binding domain"/>
    <property type="match status" value="1"/>
</dbReference>
<dbReference type="PROSITE" id="PS00297">
    <property type="entry name" value="HSP70_1"/>
    <property type="match status" value="1"/>
</dbReference>
<dbReference type="PROSITE" id="PS00329">
    <property type="entry name" value="HSP70_2"/>
    <property type="match status" value="1"/>
</dbReference>
<dbReference type="PROSITE" id="PS01036">
    <property type="entry name" value="HSP70_3"/>
    <property type="match status" value="1"/>
</dbReference>
<organism>
    <name type="scientific">Listeria welshimeri serovar 6b (strain ATCC 35897 / DSM 20650 / CCUG 15529 / CIP 8149 / NCTC 11857 / SLCC 5334 / V8)</name>
    <dbReference type="NCBI Taxonomy" id="386043"/>
    <lineage>
        <taxon>Bacteria</taxon>
        <taxon>Bacillati</taxon>
        <taxon>Bacillota</taxon>
        <taxon>Bacilli</taxon>
        <taxon>Bacillales</taxon>
        <taxon>Listeriaceae</taxon>
        <taxon>Listeria</taxon>
    </lineage>
</organism>
<proteinExistence type="inferred from homology"/>
<accession>A0AIS4</accession>
<name>DNAK_LISW6</name>
<comment type="function">
    <text evidence="1">Acts as a chaperone.</text>
</comment>
<comment type="induction">
    <text evidence="1">By stress conditions e.g. heat shock.</text>
</comment>
<comment type="similarity">
    <text evidence="1">Belongs to the heat shock protein 70 family.</text>
</comment>
<evidence type="ECO:0000255" key="1">
    <source>
        <dbReference type="HAMAP-Rule" id="MF_00332"/>
    </source>
</evidence>
<evidence type="ECO:0000256" key="2">
    <source>
        <dbReference type="SAM" id="MobiDB-lite"/>
    </source>
</evidence>
<feature type="chain" id="PRO_1000059594" description="Chaperone protein DnaK">
    <location>
        <begin position="1"/>
        <end position="613"/>
    </location>
</feature>
<feature type="region of interest" description="Disordered" evidence="2">
    <location>
        <begin position="577"/>
        <end position="613"/>
    </location>
</feature>
<feature type="compositionally biased region" description="Low complexity" evidence="2">
    <location>
        <begin position="577"/>
        <end position="591"/>
    </location>
</feature>
<feature type="compositionally biased region" description="Acidic residues" evidence="2">
    <location>
        <begin position="596"/>
        <end position="613"/>
    </location>
</feature>
<feature type="modified residue" description="Phosphothreonine; by autocatalysis" evidence="1">
    <location>
        <position position="173"/>
    </location>
</feature>
<sequence>MSKIIGIDLGTTNSAVAVLEGGEAKIIPNPEGARTTPSVVGFKNGERQVGEVAKRAAITNPNTISSIKRYMGTNHKETIEGKDYSPQEISAIILQYLKSYAEDYLGETVDKAVITVPAYFNDAQRQATKDAGKIAGLEVERIINEPTAAALAYGMDKTETDQTILVFDLGGGTFDVSILELGDGVFEVHSTAGDNELGGDDFDKKIIDYLVAEFKKDNGVDLSQDKMALQRLKDAAEKAKKDLSGVTSTQISLPFITAGEAGPLHLEVTLTRAKFDELTHDLVERTIAPTRQALKDANLSASDIDQVILVGGSTRIPAVQETIKKELGKEPHKGVNPDEVVAMGAAIQGGVITGDVKDVVLLDVTPLSLGIETMGGVMTPLIERNTTIPTSKSQTFSTAADNQPAVDIHVLQGERPMAKDNKTLGRFQLADIPPAPRGIPQIEVLFDIDKNGIVTVRAKDLGTGKEQNIVIKSSSGLTDEEIEKMVQDAEANAEEDKKNKENAELRNNADQLVFTVDKTLKELEGKIDEEEVKKAEAARDELQEALKGEDFDAIKEKTESLNEIVQNLSVKLYEQAAAEQQAAGGAEGQEAPQNDDVVDAEFEEVNDDDKENK</sequence>
<reference key="1">
    <citation type="journal article" date="2006" name="J. Bacteriol.">
        <title>Whole-genome sequence of Listeria welshimeri reveals common steps in genome reduction with Listeria innocua as compared to Listeria monocytogenes.</title>
        <authorList>
            <person name="Hain T."/>
            <person name="Steinweg C."/>
            <person name="Kuenne C.T."/>
            <person name="Billion A."/>
            <person name="Ghai R."/>
            <person name="Chatterjee S.S."/>
            <person name="Domann E."/>
            <person name="Kaerst U."/>
            <person name="Goesmann A."/>
            <person name="Bekel T."/>
            <person name="Bartels D."/>
            <person name="Kaiser O."/>
            <person name="Meyer F."/>
            <person name="Puehler A."/>
            <person name="Weisshaar B."/>
            <person name="Wehland J."/>
            <person name="Liang C."/>
            <person name="Dandekar T."/>
            <person name="Lampidis R."/>
            <person name="Kreft J."/>
            <person name="Goebel W."/>
            <person name="Chakraborty T."/>
        </authorList>
    </citation>
    <scope>NUCLEOTIDE SEQUENCE [LARGE SCALE GENOMIC DNA]</scope>
    <source>
        <strain>ATCC 35897 / DSM 20650 / CCUG 15529 / CIP 8149 / NCTC 11857 / SLCC 5334 / V8</strain>
    </source>
</reference>
<protein>
    <recommendedName>
        <fullName evidence="1">Chaperone protein DnaK</fullName>
    </recommendedName>
    <alternativeName>
        <fullName evidence="1">HSP70</fullName>
    </alternativeName>
    <alternativeName>
        <fullName evidence="1">Heat shock 70 kDa protein</fullName>
    </alternativeName>
    <alternativeName>
        <fullName evidence="1">Heat shock protein 70</fullName>
    </alternativeName>
</protein>
<keyword id="KW-0067">ATP-binding</keyword>
<keyword id="KW-0143">Chaperone</keyword>
<keyword id="KW-0547">Nucleotide-binding</keyword>
<keyword id="KW-0597">Phosphoprotein</keyword>
<keyword id="KW-0346">Stress response</keyword>